<dbReference type="EMBL" id="X15901">
    <property type="protein sequence ID" value="CAA33978.1"/>
    <property type="molecule type" value="Genomic_DNA"/>
</dbReference>
<dbReference type="EMBL" id="AY522330">
    <property type="protein sequence ID" value="AAS46140.1"/>
    <property type="status" value="ALT_INIT"/>
    <property type="molecule type" value="Genomic_DNA"/>
</dbReference>
<dbReference type="PIR" id="JQ0257">
    <property type="entry name" value="WMRZ17"/>
</dbReference>
<dbReference type="RefSeq" id="NP_039416.1">
    <molecule id="P0C319-1"/>
    <property type="nucleotide sequence ID" value="NC_001320.1"/>
</dbReference>
<dbReference type="SMR" id="P0C319"/>
<dbReference type="FunCoup" id="P0C319">
    <property type="interactions" value="383"/>
</dbReference>
<dbReference type="STRING" id="39947.P0C319"/>
<dbReference type="PaxDb" id="39947-P0C319"/>
<dbReference type="GeneID" id="3131404"/>
<dbReference type="KEGG" id="dosa:petD"/>
<dbReference type="KEGG" id="osa:3131404"/>
<dbReference type="InParanoid" id="P0C319"/>
<dbReference type="OrthoDB" id="726321at2759"/>
<dbReference type="Proteomes" id="UP000059680">
    <property type="component" value="Chloroplast"/>
</dbReference>
<dbReference type="GO" id="GO:0009535">
    <property type="term" value="C:chloroplast thylakoid membrane"/>
    <property type="evidence" value="ECO:0007669"/>
    <property type="project" value="UniProtKB-SubCell"/>
</dbReference>
<dbReference type="GO" id="GO:0009536">
    <property type="term" value="C:plastid"/>
    <property type="evidence" value="ECO:0000305"/>
    <property type="project" value="Gramene"/>
</dbReference>
<dbReference type="GO" id="GO:0045158">
    <property type="term" value="F:electron transporter, transferring electrons within cytochrome b6/f complex of photosystem II activity"/>
    <property type="evidence" value="ECO:0007669"/>
    <property type="project" value="UniProtKB-UniRule"/>
</dbReference>
<dbReference type="GO" id="GO:0045156">
    <property type="term" value="F:electron transporter, transferring electrons within the cyclic electron transport pathway of photosynthesis activity"/>
    <property type="evidence" value="ECO:0007669"/>
    <property type="project" value="InterPro"/>
</dbReference>
<dbReference type="GO" id="GO:0016491">
    <property type="term" value="F:oxidoreductase activity"/>
    <property type="evidence" value="ECO:0007669"/>
    <property type="project" value="InterPro"/>
</dbReference>
<dbReference type="GO" id="GO:0009767">
    <property type="term" value="P:photosynthetic electron transport chain"/>
    <property type="evidence" value="ECO:0007669"/>
    <property type="project" value="InterPro"/>
</dbReference>
<dbReference type="CDD" id="cd00290">
    <property type="entry name" value="cytochrome_b_C"/>
    <property type="match status" value="1"/>
</dbReference>
<dbReference type="FunFam" id="1.10.287.980:FF:000001">
    <property type="entry name" value="Cytochrome b6-f complex subunit 4"/>
    <property type="match status" value="1"/>
</dbReference>
<dbReference type="FunFam" id="1.20.5.510:FF:000002">
    <property type="entry name" value="Cytochrome b6-f complex subunit 4"/>
    <property type="match status" value="1"/>
</dbReference>
<dbReference type="Gene3D" id="1.10.287.980">
    <property type="entry name" value="plastocyanin oxidoreductase"/>
    <property type="match status" value="1"/>
</dbReference>
<dbReference type="Gene3D" id="1.20.5.510">
    <property type="entry name" value="Single helix bin"/>
    <property type="match status" value="1"/>
</dbReference>
<dbReference type="HAMAP" id="MF_01344">
    <property type="entry name" value="Cytb6_f_subIV"/>
    <property type="match status" value="1"/>
</dbReference>
<dbReference type="InterPro" id="IPR005798">
    <property type="entry name" value="Cyt_b/b6_C"/>
</dbReference>
<dbReference type="InterPro" id="IPR036150">
    <property type="entry name" value="Cyt_b/b6_C_sf"/>
</dbReference>
<dbReference type="InterPro" id="IPR005870">
    <property type="entry name" value="Cyt_b6/f_cplx_suIV"/>
</dbReference>
<dbReference type="InterPro" id="IPR048260">
    <property type="entry name" value="Cytochrome_b_C_euk/bac"/>
</dbReference>
<dbReference type="NCBIfam" id="TIGR01156">
    <property type="entry name" value="cytb6_f_IV"/>
    <property type="match status" value="1"/>
</dbReference>
<dbReference type="PANTHER" id="PTHR19271">
    <property type="entry name" value="CYTOCHROME B"/>
    <property type="match status" value="1"/>
</dbReference>
<dbReference type="PANTHER" id="PTHR19271:SF40">
    <property type="entry name" value="CYTOCHROME B"/>
    <property type="match status" value="1"/>
</dbReference>
<dbReference type="Pfam" id="PF00032">
    <property type="entry name" value="Cytochrom_B_C"/>
    <property type="match status" value="1"/>
</dbReference>
<dbReference type="PIRSF" id="PIRSF000033">
    <property type="entry name" value="B6f_17K"/>
    <property type="match status" value="1"/>
</dbReference>
<dbReference type="SUPFAM" id="SSF81648">
    <property type="entry name" value="a domain/subunit of cytochrome bc1 complex (Ubiquinol-cytochrome c reductase)"/>
    <property type="match status" value="1"/>
</dbReference>
<dbReference type="PROSITE" id="PS51003">
    <property type="entry name" value="CYTB_CTER"/>
    <property type="match status" value="1"/>
</dbReference>
<proteinExistence type="inferred from homology"/>
<evidence type="ECO:0000250" key="1"/>
<evidence type="ECO:0000255" key="2">
    <source>
        <dbReference type="HAMAP-Rule" id="MF_01344"/>
    </source>
</evidence>
<evidence type="ECO:0000305" key="3"/>
<protein>
    <recommendedName>
        <fullName evidence="2">Cytochrome b6-f complex subunit 4</fullName>
    </recommendedName>
    <alternativeName>
        <fullName evidence="2">17 kDa polypeptide</fullName>
    </alternativeName>
</protein>
<comment type="function">
    <text evidence="2">Component of the cytochrome b6-f complex, which mediates electron transfer between photosystem II (PSII) and photosystem I (PSI), cyclic electron flow around PSI, and state transitions.</text>
</comment>
<comment type="subunit">
    <text evidence="1">The 4 large subunits of the cytochrome b6-f complex are cytochrome b6, subunit IV (17 kDa polypeptide, petD), cytochrome f and the Rieske protein, while the 4 small subunits are petG, petL, petM and petN. The complex functions as a dimer (By similarity).</text>
</comment>
<comment type="subcellular location">
    <subcellularLocation>
        <location evidence="2">Plastid</location>
        <location evidence="2">Chloroplast thylakoid membrane</location>
        <topology evidence="2">Multi-pass membrane protein</topology>
    </subcellularLocation>
</comment>
<comment type="alternative products">
    <event type="alternative splicing"/>
    <isoform>
        <id>P0C319-1</id>
        <id>P12118-1</id>
        <name>Short</name>
        <sequence type="displayed"/>
    </isoform>
    <isoform>
        <id>P0C319-2</id>
        <id>P12118-2</id>
        <name>Long</name>
        <sequence type="described" ref="VSP_019388"/>
    </isoform>
</comment>
<comment type="miscellaneous">
    <text>A longer mRNA that is not produced by splicing has been shown to be transcribed in barley and maize; it can also be predicted for rice. It is not known if this mRNA is translated.</text>
</comment>
<comment type="similarity">
    <text evidence="2">Belongs to the cytochrome b family. PetD subfamily.</text>
</comment>
<comment type="sequence caution" evidence="3">
    <conflict type="erroneous initiation">
        <sequence resource="EMBL-CDS" id="AAS46140"/>
    </conflict>
</comment>
<reference key="1">
    <citation type="journal article" date="1989" name="Mol. Gen. Genet.">
        <title>The complete sequence of the rice (Oryza sativa) chloroplast genome: intermolecular recombination between distinct tRNA genes accounts for a major plastid DNA inversion during the evolution of the cereals.</title>
        <authorList>
            <person name="Hiratsuka J."/>
            <person name="Shimada H."/>
            <person name="Whittier R."/>
            <person name="Ishibashi T."/>
            <person name="Sakamoto M."/>
            <person name="Mori M."/>
            <person name="Kondo C."/>
            <person name="Honji Y."/>
            <person name="Sun C.-R."/>
            <person name="Meng B.-Y."/>
            <person name="Li Y.-Q."/>
            <person name="Kanno A."/>
            <person name="Nishizawa Y."/>
            <person name="Hirai A."/>
            <person name="Shinozaki K."/>
            <person name="Sugiura M."/>
        </authorList>
    </citation>
    <scope>NUCLEOTIDE SEQUENCE [LARGE SCALE GENOMIC DNA]</scope>
    <source>
        <strain>cv. Nipponbare</strain>
    </source>
</reference>
<reference key="2">
    <citation type="journal article" date="2004" name="Plant Physiol.">
        <title>A comparison of rice chloroplast genomes.</title>
        <authorList>
            <person name="Tang J."/>
            <person name="Xia H."/>
            <person name="Cao M."/>
            <person name="Zhang X."/>
            <person name="Zeng W."/>
            <person name="Hu S."/>
            <person name="Tong W."/>
            <person name="Wang J."/>
            <person name="Wang J."/>
            <person name="Yu J."/>
            <person name="Yang H."/>
            <person name="Zhu L."/>
        </authorList>
    </citation>
    <scope>NUCLEOTIDE SEQUENCE [LARGE SCALE GENOMIC DNA]</scope>
    <source>
        <strain>cv. Nipponbare</strain>
    </source>
</reference>
<feature type="chain" id="PRO_0000288631" description="Cytochrome b6-f complex subunit 4">
    <location>
        <begin position="1"/>
        <end position="160"/>
    </location>
</feature>
<feature type="transmembrane region" description="Helical" evidence="2">
    <location>
        <begin position="36"/>
        <end position="56"/>
    </location>
</feature>
<feature type="transmembrane region" description="Helical" evidence="2">
    <location>
        <begin position="95"/>
        <end position="115"/>
    </location>
</feature>
<feature type="transmembrane region" description="Helical" evidence="2">
    <location>
        <begin position="131"/>
        <end position="151"/>
    </location>
</feature>
<feature type="splice variant" id="VSP_019388" description="In isoform Long." evidence="3">
    <original>MGV</original>
    <variation>MSGSFGGWILKNSPIPI</variation>
    <location>
        <begin position="1"/>
        <end position="3"/>
    </location>
</feature>
<name>PETD_ORYSJ</name>
<accession>P0C319</accession>
<accession>P12118</accession>
<accession>Q6QXZ1</accession>
<accession>Q6QY55</accession>
<gene>
    <name evidence="2" type="primary">petD</name>
    <name type="ordered locus">LOC_Osp1g00650</name>
    <name type="ORF">Nip099</name>
</gene>
<organism>
    <name type="scientific">Oryza sativa subsp. japonica</name>
    <name type="common">Rice</name>
    <dbReference type="NCBI Taxonomy" id="39947"/>
    <lineage>
        <taxon>Eukaryota</taxon>
        <taxon>Viridiplantae</taxon>
        <taxon>Streptophyta</taxon>
        <taxon>Embryophyta</taxon>
        <taxon>Tracheophyta</taxon>
        <taxon>Spermatophyta</taxon>
        <taxon>Magnoliopsida</taxon>
        <taxon>Liliopsida</taxon>
        <taxon>Poales</taxon>
        <taxon>Poaceae</taxon>
        <taxon>BOP clade</taxon>
        <taxon>Oryzoideae</taxon>
        <taxon>Oryzeae</taxon>
        <taxon>Oryzinae</taxon>
        <taxon>Oryza</taxon>
        <taxon>Oryza sativa</taxon>
    </lineage>
</organism>
<sequence length="160" mass="17503">MGVTKKPDLNDPVLRAKLAKGMGHNYYGEPAWPNDLLYIFPVVILGTIACNVGLAVLEPSMIGEPADPFATPLEILPEWYFFPVFQILRTVPNKLLGVLLMVSVPTGLLTVPFLENVNKFQNPFRRPVATTVFLIGTAVALWLGIGATLPIEKSLTLGLF</sequence>
<geneLocation type="chloroplast"/>
<keyword id="KW-0025">Alternative splicing</keyword>
<keyword id="KW-0150">Chloroplast</keyword>
<keyword id="KW-0249">Electron transport</keyword>
<keyword id="KW-0472">Membrane</keyword>
<keyword id="KW-0602">Photosynthesis</keyword>
<keyword id="KW-0934">Plastid</keyword>
<keyword id="KW-1185">Reference proteome</keyword>
<keyword id="KW-0793">Thylakoid</keyword>
<keyword id="KW-0812">Transmembrane</keyword>
<keyword id="KW-1133">Transmembrane helix</keyword>
<keyword id="KW-0813">Transport</keyword>